<feature type="chain" id="PRO_1000075917" description="2-C-methyl-D-erythritol 2,4-cyclodiphosphate synthase">
    <location>
        <begin position="1"/>
        <end position="157"/>
    </location>
</feature>
<feature type="binding site" evidence="1">
    <location>
        <begin position="8"/>
        <end position="10"/>
    </location>
    <ligand>
        <name>4-CDP-2-C-methyl-D-erythritol 2-phosphate</name>
        <dbReference type="ChEBI" id="CHEBI:57919"/>
    </ligand>
</feature>
<feature type="binding site" evidence="1">
    <location>
        <position position="8"/>
    </location>
    <ligand>
        <name>a divalent metal cation</name>
        <dbReference type="ChEBI" id="CHEBI:60240"/>
    </ligand>
</feature>
<feature type="binding site" evidence="1">
    <location>
        <position position="10"/>
    </location>
    <ligand>
        <name>a divalent metal cation</name>
        <dbReference type="ChEBI" id="CHEBI:60240"/>
    </ligand>
</feature>
<feature type="binding site" evidence="1">
    <location>
        <begin position="34"/>
        <end position="35"/>
    </location>
    <ligand>
        <name>4-CDP-2-C-methyl-D-erythritol 2-phosphate</name>
        <dbReference type="ChEBI" id="CHEBI:57919"/>
    </ligand>
</feature>
<feature type="binding site" evidence="1">
    <location>
        <position position="42"/>
    </location>
    <ligand>
        <name>a divalent metal cation</name>
        <dbReference type="ChEBI" id="CHEBI:60240"/>
    </ligand>
</feature>
<feature type="binding site" evidence="1">
    <location>
        <begin position="56"/>
        <end position="58"/>
    </location>
    <ligand>
        <name>4-CDP-2-C-methyl-D-erythritol 2-phosphate</name>
        <dbReference type="ChEBI" id="CHEBI:57919"/>
    </ligand>
</feature>
<feature type="binding site" evidence="1">
    <location>
        <begin position="132"/>
        <end position="135"/>
    </location>
    <ligand>
        <name>4-CDP-2-C-methyl-D-erythritol 2-phosphate</name>
        <dbReference type="ChEBI" id="CHEBI:57919"/>
    </ligand>
</feature>
<feature type="binding site" evidence="1">
    <location>
        <position position="142"/>
    </location>
    <ligand>
        <name>4-CDP-2-C-methyl-D-erythritol 2-phosphate</name>
        <dbReference type="ChEBI" id="CHEBI:57919"/>
    </ligand>
</feature>
<feature type="site" description="Transition state stabilizer" evidence="1">
    <location>
        <position position="34"/>
    </location>
</feature>
<feature type="site" description="Transition state stabilizer" evidence="1">
    <location>
        <position position="133"/>
    </location>
</feature>
<comment type="function">
    <text evidence="1">Involved in the biosynthesis of isopentenyl diphosphate (IPP) and dimethylallyl diphosphate (DMAPP), two major building blocks of isoprenoid compounds. Catalyzes the conversion of 4-diphosphocytidyl-2-C-methyl-D-erythritol 2-phosphate (CDP-ME2P) to 2-C-methyl-D-erythritol 2,4-cyclodiphosphate (ME-CPP) with a corresponding release of cytidine 5-monophosphate (CMP).</text>
</comment>
<comment type="catalytic activity">
    <reaction evidence="1">
        <text>4-CDP-2-C-methyl-D-erythritol 2-phosphate = 2-C-methyl-D-erythritol 2,4-cyclic diphosphate + CMP</text>
        <dbReference type="Rhea" id="RHEA:23864"/>
        <dbReference type="ChEBI" id="CHEBI:57919"/>
        <dbReference type="ChEBI" id="CHEBI:58483"/>
        <dbReference type="ChEBI" id="CHEBI:60377"/>
        <dbReference type="EC" id="4.6.1.12"/>
    </reaction>
</comment>
<comment type="cofactor">
    <cofactor evidence="1">
        <name>a divalent metal cation</name>
        <dbReference type="ChEBI" id="CHEBI:60240"/>
    </cofactor>
    <text evidence="1">Binds 1 divalent metal cation per subunit.</text>
</comment>
<comment type="pathway">
    <text evidence="1">Isoprenoid biosynthesis; isopentenyl diphosphate biosynthesis via DXP pathway; isopentenyl diphosphate from 1-deoxy-D-xylulose 5-phosphate: step 4/6.</text>
</comment>
<comment type="subunit">
    <text evidence="1">Homotrimer.</text>
</comment>
<comment type="similarity">
    <text evidence="1">Belongs to the IspF family.</text>
</comment>
<organism>
    <name type="scientific">Chlorobium phaeovibrioides (strain DSM 265 / 1930)</name>
    <name type="common">Prosthecochloris vibrioformis (strain DSM 265)</name>
    <dbReference type="NCBI Taxonomy" id="290318"/>
    <lineage>
        <taxon>Bacteria</taxon>
        <taxon>Pseudomonadati</taxon>
        <taxon>Chlorobiota</taxon>
        <taxon>Chlorobiia</taxon>
        <taxon>Chlorobiales</taxon>
        <taxon>Chlorobiaceae</taxon>
        <taxon>Chlorobium/Pelodictyon group</taxon>
        <taxon>Chlorobium</taxon>
    </lineage>
</organism>
<keyword id="KW-0414">Isoprene biosynthesis</keyword>
<keyword id="KW-0456">Lyase</keyword>
<keyword id="KW-0479">Metal-binding</keyword>
<evidence type="ECO:0000255" key="1">
    <source>
        <dbReference type="HAMAP-Rule" id="MF_00107"/>
    </source>
</evidence>
<name>ISPF_CHLPM</name>
<gene>
    <name evidence="1" type="primary">ispF</name>
    <name type="ordered locus">Cvib_1388</name>
</gene>
<sequence>MRIGIGIDVHSFKEGRKLIVGGVDIPSPKGLDGHSDADVLLHAVSDALLGAAALGDIGLHFPDTSPEFKDIDSMILLKHVGKLLEKNGWRTVNVDAMLLLEAPKIAPFVVDMRKNIARCLQIETDLVSVKATTNEKLGYIGREEGAAAHAVCIIEKA</sequence>
<proteinExistence type="inferred from homology"/>
<reference key="1">
    <citation type="submission" date="2007-03" db="EMBL/GenBank/DDBJ databases">
        <title>Complete sequence of Prosthecochloris vibrioformis DSM 265.</title>
        <authorList>
            <consortium name="US DOE Joint Genome Institute"/>
            <person name="Copeland A."/>
            <person name="Lucas S."/>
            <person name="Lapidus A."/>
            <person name="Barry K."/>
            <person name="Detter J.C."/>
            <person name="Glavina del Rio T."/>
            <person name="Hammon N."/>
            <person name="Israni S."/>
            <person name="Pitluck S."/>
            <person name="Schmutz J."/>
            <person name="Larimer F."/>
            <person name="Land M."/>
            <person name="Hauser L."/>
            <person name="Mikhailova N."/>
            <person name="Li T."/>
            <person name="Overmann J."/>
            <person name="Schuster S.C."/>
            <person name="Bryant D.A."/>
            <person name="Richardson P."/>
        </authorList>
    </citation>
    <scope>NUCLEOTIDE SEQUENCE [LARGE SCALE GENOMIC DNA]</scope>
    <source>
        <strain>DSM 265 / 1930</strain>
    </source>
</reference>
<dbReference type="EC" id="4.6.1.12" evidence="1"/>
<dbReference type="EMBL" id="CP000607">
    <property type="protein sequence ID" value="ABP37399.1"/>
    <property type="molecule type" value="Genomic_DNA"/>
</dbReference>
<dbReference type="SMR" id="A4SFZ0"/>
<dbReference type="STRING" id="290318.Cvib_1388"/>
<dbReference type="KEGG" id="pvi:Cvib_1388"/>
<dbReference type="eggNOG" id="COG0245">
    <property type="taxonomic scope" value="Bacteria"/>
</dbReference>
<dbReference type="HOGENOM" id="CLU_084630_2_0_10"/>
<dbReference type="OrthoDB" id="9804336at2"/>
<dbReference type="UniPathway" id="UPA00056">
    <property type="reaction ID" value="UER00095"/>
</dbReference>
<dbReference type="GO" id="GO:0008685">
    <property type="term" value="F:2-C-methyl-D-erythritol 2,4-cyclodiphosphate synthase activity"/>
    <property type="evidence" value="ECO:0007669"/>
    <property type="project" value="UniProtKB-UniRule"/>
</dbReference>
<dbReference type="GO" id="GO:0046872">
    <property type="term" value="F:metal ion binding"/>
    <property type="evidence" value="ECO:0007669"/>
    <property type="project" value="UniProtKB-KW"/>
</dbReference>
<dbReference type="GO" id="GO:0019288">
    <property type="term" value="P:isopentenyl diphosphate biosynthetic process, methylerythritol 4-phosphate pathway"/>
    <property type="evidence" value="ECO:0007669"/>
    <property type="project" value="UniProtKB-UniRule"/>
</dbReference>
<dbReference type="GO" id="GO:0016114">
    <property type="term" value="P:terpenoid biosynthetic process"/>
    <property type="evidence" value="ECO:0007669"/>
    <property type="project" value="InterPro"/>
</dbReference>
<dbReference type="CDD" id="cd00554">
    <property type="entry name" value="MECDP_synthase"/>
    <property type="match status" value="1"/>
</dbReference>
<dbReference type="FunFam" id="3.30.1330.50:FF:000001">
    <property type="entry name" value="2-C-methyl-D-erythritol 2,4-cyclodiphosphate synthase"/>
    <property type="match status" value="1"/>
</dbReference>
<dbReference type="Gene3D" id="3.30.1330.50">
    <property type="entry name" value="2-C-methyl-D-erythritol 2,4-cyclodiphosphate synthase"/>
    <property type="match status" value="1"/>
</dbReference>
<dbReference type="HAMAP" id="MF_00107">
    <property type="entry name" value="IspF"/>
    <property type="match status" value="1"/>
</dbReference>
<dbReference type="InterPro" id="IPR003526">
    <property type="entry name" value="MECDP_synthase"/>
</dbReference>
<dbReference type="InterPro" id="IPR020555">
    <property type="entry name" value="MECDP_synthase_CS"/>
</dbReference>
<dbReference type="InterPro" id="IPR036571">
    <property type="entry name" value="MECDP_synthase_sf"/>
</dbReference>
<dbReference type="NCBIfam" id="TIGR00151">
    <property type="entry name" value="ispF"/>
    <property type="match status" value="1"/>
</dbReference>
<dbReference type="PANTHER" id="PTHR43181">
    <property type="entry name" value="2-C-METHYL-D-ERYTHRITOL 2,4-CYCLODIPHOSPHATE SYNTHASE, CHLOROPLASTIC"/>
    <property type="match status" value="1"/>
</dbReference>
<dbReference type="PANTHER" id="PTHR43181:SF1">
    <property type="entry name" value="2-C-METHYL-D-ERYTHRITOL 2,4-CYCLODIPHOSPHATE SYNTHASE, CHLOROPLASTIC"/>
    <property type="match status" value="1"/>
</dbReference>
<dbReference type="Pfam" id="PF02542">
    <property type="entry name" value="YgbB"/>
    <property type="match status" value="1"/>
</dbReference>
<dbReference type="SUPFAM" id="SSF69765">
    <property type="entry name" value="IpsF-like"/>
    <property type="match status" value="1"/>
</dbReference>
<dbReference type="PROSITE" id="PS01350">
    <property type="entry name" value="ISPF"/>
    <property type="match status" value="1"/>
</dbReference>
<protein>
    <recommendedName>
        <fullName evidence="1">2-C-methyl-D-erythritol 2,4-cyclodiphosphate synthase</fullName>
        <shortName evidence="1">MECDP-synthase</shortName>
        <shortName evidence="1">MECPP-synthase</shortName>
        <shortName evidence="1">MECPS</shortName>
        <ecNumber evidence="1">4.6.1.12</ecNumber>
    </recommendedName>
</protein>
<accession>A4SFZ0</accession>